<protein>
    <recommendedName>
        <fullName evidence="1">Urease accessory protein UreG</fullName>
    </recommendedName>
</protein>
<keyword id="KW-0143">Chaperone</keyword>
<keyword id="KW-0963">Cytoplasm</keyword>
<keyword id="KW-0342">GTP-binding</keyword>
<keyword id="KW-0996">Nickel insertion</keyword>
<keyword id="KW-0547">Nucleotide-binding</keyword>
<comment type="function">
    <text evidence="1">Facilitates the functional incorporation of the urease nickel metallocenter. This process requires GTP hydrolysis, probably effectuated by UreG.</text>
</comment>
<comment type="subunit">
    <text evidence="1">Homodimer. UreD, UreF and UreG form a complex that acts as a GTP-hydrolysis-dependent molecular chaperone, activating the urease apoprotein by helping to assemble the nickel containing metallocenter of UreC. The UreE protein probably delivers the nickel.</text>
</comment>
<comment type="subcellular location">
    <subcellularLocation>
        <location evidence="1">Cytoplasm</location>
    </subcellularLocation>
</comment>
<comment type="similarity">
    <text evidence="1">Belongs to the SIMIBI class G3E GTPase family. UreG subfamily.</text>
</comment>
<organism>
    <name type="scientific">Mycobacterium sp. (strain KMS)</name>
    <dbReference type="NCBI Taxonomy" id="189918"/>
    <lineage>
        <taxon>Bacteria</taxon>
        <taxon>Bacillati</taxon>
        <taxon>Actinomycetota</taxon>
        <taxon>Actinomycetes</taxon>
        <taxon>Mycobacteriales</taxon>
        <taxon>Mycobacteriaceae</taxon>
        <taxon>Mycobacterium</taxon>
    </lineage>
</organism>
<gene>
    <name evidence="1" type="primary">ureG</name>
    <name type="ordered locus">Mkms_2847</name>
</gene>
<dbReference type="EMBL" id="CP000518">
    <property type="protein sequence ID" value="ABL92041.1"/>
    <property type="molecule type" value="Genomic_DNA"/>
</dbReference>
<dbReference type="SMR" id="A1UGT3"/>
<dbReference type="STRING" id="189918.Mkms_2847"/>
<dbReference type="KEGG" id="mkm:Mkms_2847"/>
<dbReference type="HOGENOM" id="CLU_072144_1_0_11"/>
<dbReference type="OrthoDB" id="9802035at2"/>
<dbReference type="GO" id="GO:0005737">
    <property type="term" value="C:cytoplasm"/>
    <property type="evidence" value="ECO:0007669"/>
    <property type="project" value="UniProtKB-SubCell"/>
</dbReference>
<dbReference type="GO" id="GO:0005525">
    <property type="term" value="F:GTP binding"/>
    <property type="evidence" value="ECO:0007669"/>
    <property type="project" value="UniProtKB-KW"/>
</dbReference>
<dbReference type="GO" id="GO:0003924">
    <property type="term" value="F:GTPase activity"/>
    <property type="evidence" value="ECO:0007669"/>
    <property type="project" value="InterPro"/>
</dbReference>
<dbReference type="GO" id="GO:0016151">
    <property type="term" value="F:nickel cation binding"/>
    <property type="evidence" value="ECO:0007669"/>
    <property type="project" value="UniProtKB-UniRule"/>
</dbReference>
<dbReference type="GO" id="GO:0043419">
    <property type="term" value="P:urea catabolic process"/>
    <property type="evidence" value="ECO:0007669"/>
    <property type="project" value="InterPro"/>
</dbReference>
<dbReference type="CDD" id="cd05540">
    <property type="entry name" value="UreG"/>
    <property type="match status" value="1"/>
</dbReference>
<dbReference type="FunFam" id="3.40.50.300:FF:000208">
    <property type="entry name" value="Urease accessory protein UreG"/>
    <property type="match status" value="1"/>
</dbReference>
<dbReference type="Gene3D" id="3.40.50.300">
    <property type="entry name" value="P-loop containing nucleotide triphosphate hydrolases"/>
    <property type="match status" value="1"/>
</dbReference>
<dbReference type="HAMAP" id="MF_01389">
    <property type="entry name" value="UreG"/>
    <property type="match status" value="1"/>
</dbReference>
<dbReference type="InterPro" id="IPR003495">
    <property type="entry name" value="CobW/HypB/UreG_nucleotide-bd"/>
</dbReference>
<dbReference type="InterPro" id="IPR027417">
    <property type="entry name" value="P-loop_NTPase"/>
</dbReference>
<dbReference type="InterPro" id="IPR004400">
    <property type="entry name" value="UreG"/>
</dbReference>
<dbReference type="NCBIfam" id="TIGR00101">
    <property type="entry name" value="ureG"/>
    <property type="match status" value="1"/>
</dbReference>
<dbReference type="PANTHER" id="PTHR31715">
    <property type="entry name" value="UREASE ACCESSORY PROTEIN G"/>
    <property type="match status" value="1"/>
</dbReference>
<dbReference type="PANTHER" id="PTHR31715:SF0">
    <property type="entry name" value="UREASE ACCESSORY PROTEIN G"/>
    <property type="match status" value="1"/>
</dbReference>
<dbReference type="Pfam" id="PF02492">
    <property type="entry name" value="cobW"/>
    <property type="match status" value="1"/>
</dbReference>
<dbReference type="PIRSF" id="PIRSF005624">
    <property type="entry name" value="Ni-bind_GTPase"/>
    <property type="match status" value="1"/>
</dbReference>
<dbReference type="SUPFAM" id="SSF52540">
    <property type="entry name" value="P-loop containing nucleoside triphosphate hydrolases"/>
    <property type="match status" value="1"/>
</dbReference>
<evidence type="ECO:0000255" key="1">
    <source>
        <dbReference type="HAMAP-Rule" id="MF_01389"/>
    </source>
</evidence>
<evidence type="ECO:0000256" key="2">
    <source>
        <dbReference type="SAM" id="MobiDB-lite"/>
    </source>
</evidence>
<sequence>MPPHFLSADSTGQPHRHADRPKRVRTPGEPLRIGVGGPVGSGKTALVAALCRQLRDELSLAVLTNDIYTTEDADFLRRHAVLPDDRIAAVQTGGCPHTAIRDDITANLDAIDDLVAGHDHLDLILVESGGDNLTATFSSGLVDVQIFVVDVAGGDKVPRKGGPGVTFSDLLVINKTDLAPMVGADLDVMRRDSTKVRGERPFVLISLTADPTAGPVLDWVRAQLRVPVQG</sequence>
<feature type="chain" id="PRO_1000145191" description="Urease accessory protein UreG">
    <location>
        <begin position="1"/>
        <end position="230"/>
    </location>
</feature>
<feature type="region of interest" description="Disordered" evidence="2">
    <location>
        <begin position="1"/>
        <end position="31"/>
    </location>
</feature>
<feature type="compositionally biased region" description="Basic residues" evidence="2">
    <location>
        <begin position="14"/>
        <end position="25"/>
    </location>
</feature>
<feature type="binding site" evidence="1">
    <location>
        <begin position="37"/>
        <end position="44"/>
    </location>
    <ligand>
        <name>GTP</name>
        <dbReference type="ChEBI" id="CHEBI:37565"/>
    </ligand>
</feature>
<reference key="1">
    <citation type="submission" date="2006-12" db="EMBL/GenBank/DDBJ databases">
        <title>Complete sequence of chromosome of Mycobacterium sp. KMS.</title>
        <authorList>
            <consortium name="US DOE Joint Genome Institute"/>
            <person name="Copeland A."/>
            <person name="Lucas S."/>
            <person name="Lapidus A."/>
            <person name="Barry K."/>
            <person name="Detter J.C."/>
            <person name="Glavina del Rio T."/>
            <person name="Hammon N."/>
            <person name="Israni S."/>
            <person name="Dalin E."/>
            <person name="Tice H."/>
            <person name="Pitluck S."/>
            <person name="Kiss H."/>
            <person name="Brettin T."/>
            <person name="Bruce D."/>
            <person name="Han C."/>
            <person name="Tapia R."/>
            <person name="Gilna P."/>
            <person name="Schmutz J."/>
            <person name="Larimer F."/>
            <person name="Land M."/>
            <person name="Hauser L."/>
            <person name="Kyrpides N."/>
            <person name="Mikhailova N."/>
            <person name="Miller C.D."/>
            <person name="Richardson P."/>
        </authorList>
    </citation>
    <scope>NUCLEOTIDE SEQUENCE [LARGE SCALE GENOMIC DNA]</scope>
    <source>
        <strain>KMS</strain>
    </source>
</reference>
<name>UREG_MYCSK</name>
<accession>A1UGT3</accession>
<proteinExistence type="inferred from homology"/>